<name>ITR2_OPUST</name>
<organism>
    <name type="scientific">Opuntia streptacantha</name>
    <name type="common">Prickly pear cactus</name>
    <name type="synonym">Opuntia cardona</name>
    <dbReference type="NCBI Taxonomy" id="393608"/>
    <lineage>
        <taxon>Eukaryota</taxon>
        <taxon>Viridiplantae</taxon>
        <taxon>Streptophyta</taxon>
        <taxon>Embryophyta</taxon>
        <taxon>Tracheophyta</taxon>
        <taxon>Spermatophyta</taxon>
        <taxon>Magnoliopsida</taxon>
        <taxon>eudicotyledons</taxon>
        <taxon>Gunneridae</taxon>
        <taxon>Pentapetalae</taxon>
        <taxon>Caryophyllales</taxon>
        <taxon>Cactineae</taxon>
        <taxon>Cactaceae</taxon>
        <taxon>Opuntioideae</taxon>
        <taxon>Opuntia</taxon>
    </lineage>
</organism>
<protein>
    <recommendedName>
        <fullName evidence="2">Trypsin inhibitor 2</fullName>
        <shortName evidence="2">OsTI 2</shortName>
    </recommendedName>
</protein>
<reference evidence="3" key="1">
    <citation type="journal article" date="2009" name="Phytochemistry">
        <title>Characterization of a highly stable trypsin-like proteinase inhibitor from the seeds of Opuntia streptacantha (O. streptacantha Lemaire).</title>
        <authorList>
            <person name="Torres-Castillo J.A."/>
            <person name="Mondragon Jacobo C."/>
            <person name="Blanco-Labra A."/>
        </authorList>
    </citation>
    <scope>PROTEIN SEQUENCE</scope>
    <scope>FUNCTION</scope>
    <scope>BIOPHYSICOCHEMICAL PROPERTIES</scope>
    <scope>DISULFIDE BONDS</scope>
    <scope>MASS SPECTROMETRY</scope>
    <scope>PYROGLUTAMATE FORMATION AT GLN-1</scope>
    <source>
        <tissue evidence="1">Seed</tissue>
    </source>
</reference>
<sequence length="38" mass="4192">QQCAERGQSCNPYEGIECCGDILCIQPRIWPPVPGRCA</sequence>
<accession>P86388</accession>
<dbReference type="GO" id="GO:0004867">
    <property type="term" value="F:serine-type endopeptidase inhibitor activity"/>
    <property type="evidence" value="ECO:0007669"/>
    <property type="project" value="UniProtKB-KW"/>
</dbReference>
<proteinExistence type="evidence at protein level"/>
<comment type="function">
    <text evidence="1">Inhibits trypsin-like proteases from the guts of the insect pests P.truncatus, P.americana, Acheta sp and Gryllus sp.</text>
</comment>
<comment type="biophysicochemical properties">
    <phDependence>
        <text evidence="1">Optimum pH is 8.0. Alkaline pH values decrease the thermostability of this inhibitor.</text>
    </phDependence>
    <temperatureDependence>
        <text evidence="1">Thermostable. 10% inactivation is seen after incubation at 95 degrees Celsius for 2 hours at pH 9.0. Retains activity after incubation at 120 degrees Celsius for 1 hour at pH 3.0 and pH 7.0, but at pH 9.0 40% of the activity is lost.</text>
    </temperatureDependence>
</comment>
<comment type="PTM">
    <text evidence="1">Contains disulfide bonds.</text>
</comment>
<comment type="mass spectrometry" mass="4190.0" method="MALDI" evidence="1"/>
<feature type="chain" id="PRO_0000389518" description="Trypsin inhibitor 2">
    <location>
        <begin position="1"/>
        <end position="38"/>
    </location>
</feature>
<feature type="modified residue" description="Pyrrolidone carboxylic acid" evidence="1">
    <location>
        <position position="1"/>
    </location>
</feature>
<feature type="unsure residue" description="Q or K" evidence="1">
    <location>
        <position position="2"/>
    </location>
</feature>
<feature type="unsure residue" description="Q or K" evidence="1">
    <location>
        <position position="8"/>
    </location>
</feature>
<feature type="unsure residue" description="Q or K" evidence="1">
    <location>
        <position position="26"/>
    </location>
</feature>
<evidence type="ECO:0000269" key="1">
    <source>
    </source>
</evidence>
<evidence type="ECO:0000303" key="2">
    <source>
    </source>
</evidence>
<evidence type="ECO:0000305" key="3"/>
<keyword id="KW-0903">Direct protein sequencing</keyword>
<keyword id="KW-1015">Disulfide bond</keyword>
<keyword id="KW-0646">Protease inhibitor</keyword>
<keyword id="KW-0873">Pyrrolidone carboxylic acid</keyword>
<keyword id="KW-0722">Serine protease inhibitor</keyword>